<dbReference type="EMBL" id="FO080494">
    <property type="protein sequence ID" value="CCD64135.1"/>
    <property type="molecule type" value="Genomic_DNA"/>
</dbReference>
<dbReference type="PIR" id="T31800">
    <property type="entry name" value="T31800"/>
</dbReference>
<dbReference type="RefSeq" id="NP_504558.1">
    <property type="nucleotide sequence ID" value="NM_072157.8"/>
</dbReference>
<dbReference type="SMR" id="O16368"/>
<dbReference type="BioGRID" id="44036">
    <property type="interactions" value="51"/>
</dbReference>
<dbReference type="FunCoup" id="O16368">
    <property type="interactions" value="2616"/>
</dbReference>
<dbReference type="IntAct" id="O16368">
    <property type="interactions" value="3"/>
</dbReference>
<dbReference type="STRING" id="6239.F29G9.5.1"/>
<dbReference type="PaxDb" id="6239-F29G9.5"/>
<dbReference type="PeptideAtlas" id="O16368"/>
<dbReference type="EnsemblMetazoa" id="F29G9.5.1">
    <property type="protein sequence ID" value="F29G9.5.1"/>
    <property type="gene ID" value="WBGene00004502"/>
</dbReference>
<dbReference type="GeneID" id="178988"/>
<dbReference type="KEGG" id="cel:CELE_F29G9.5"/>
<dbReference type="UCSC" id="F29G9.5">
    <property type="organism name" value="c. elegans"/>
</dbReference>
<dbReference type="AGR" id="WB:WBGene00004502"/>
<dbReference type="CTD" id="178988"/>
<dbReference type="WormBase" id="F29G9.5">
    <property type="protein sequence ID" value="CE09799"/>
    <property type="gene ID" value="WBGene00004502"/>
    <property type="gene designation" value="rpt-2"/>
</dbReference>
<dbReference type="eggNOG" id="KOG0726">
    <property type="taxonomic scope" value="Eukaryota"/>
</dbReference>
<dbReference type="GeneTree" id="ENSGT01020000230346"/>
<dbReference type="HOGENOM" id="CLU_000688_2_3_1"/>
<dbReference type="InParanoid" id="O16368"/>
<dbReference type="OMA" id="QDDTDPM"/>
<dbReference type="OrthoDB" id="10255768at2759"/>
<dbReference type="PhylomeDB" id="O16368"/>
<dbReference type="Reactome" id="R-CEL-1234176">
    <property type="pathway name" value="Oxygen-dependent proline hydroxylation of Hypoxia-inducible Factor Alpha"/>
</dbReference>
<dbReference type="Reactome" id="R-CEL-1236978">
    <property type="pathway name" value="Cross-presentation of soluble exogenous antigens (endosomes)"/>
</dbReference>
<dbReference type="Reactome" id="R-CEL-187577">
    <property type="pathway name" value="SCF(Skp2)-mediated degradation of p27/p21"/>
</dbReference>
<dbReference type="Reactome" id="R-CEL-195253">
    <property type="pathway name" value="Degradation of beta-catenin by the destruction complex"/>
</dbReference>
<dbReference type="Reactome" id="R-CEL-349425">
    <property type="pathway name" value="Autodegradation of the E3 ubiquitin ligase COP1"/>
</dbReference>
<dbReference type="Reactome" id="R-CEL-350562">
    <property type="pathway name" value="Regulation of ornithine decarboxylase (ODC)"/>
</dbReference>
<dbReference type="Reactome" id="R-CEL-382556">
    <property type="pathway name" value="ABC-family proteins mediated transport"/>
</dbReference>
<dbReference type="Reactome" id="R-CEL-4608870">
    <property type="pathway name" value="Asymmetric localization of PCP proteins"/>
</dbReference>
<dbReference type="Reactome" id="R-CEL-4641258">
    <property type="pathway name" value="Degradation of DVL"/>
</dbReference>
<dbReference type="Reactome" id="R-CEL-532668">
    <property type="pathway name" value="N-glycan trimming in the ER and Calnexin/Calreticulin cycle"/>
</dbReference>
<dbReference type="Reactome" id="R-CEL-5632684">
    <property type="pathway name" value="Hedgehog 'on' state"/>
</dbReference>
<dbReference type="Reactome" id="R-CEL-5687128">
    <property type="pathway name" value="MAPK6/MAPK4 signaling"/>
</dbReference>
<dbReference type="Reactome" id="R-CEL-5689603">
    <property type="pathway name" value="UCH proteinases"/>
</dbReference>
<dbReference type="Reactome" id="R-CEL-5689880">
    <property type="pathway name" value="Ub-specific processing proteases"/>
</dbReference>
<dbReference type="Reactome" id="R-CEL-68949">
    <property type="pathway name" value="Orc1 removal from chromatin"/>
</dbReference>
<dbReference type="Reactome" id="R-CEL-69017">
    <property type="pathway name" value="CDK-mediated phosphorylation and removal of Cdc6"/>
</dbReference>
<dbReference type="Reactome" id="R-CEL-69601">
    <property type="pathway name" value="Ubiquitin Mediated Degradation of Phosphorylated Cdc25A"/>
</dbReference>
<dbReference type="Reactome" id="R-CEL-75815">
    <property type="pathway name" value="Ubiquitin-dependent degradation of Cyclin D"/>
</dbReference>
<dbReference type="Reactome" id="R-CEL-8854050">
    <property type="pathway name" value="FBXL7 down-regulates AURKA during mitotic entry and in early mitosis"/>
</dbReference>
<dbReference type="Reactome" id="R-CEL-8939902">
    <property type="pathway name" value="Regulation of RUNX2 expression and activity"/>
</dbReference>
<dbReference type="Reactome" id="R-CEL-8941858">
    <property type="pathway name" value="Regulation of RUNX3 expression and activity"/>
</dbReference>
<dbReference type="Reactome" id="R-CEL-8948751">
    <property type="pathway name" value="Regulation of PTEN stability and activity"/>
</dbReference>
<dbReference type="Reactome" id="R-CEL-8951664">
    <property type="pathway name" value="Neddylation"/>
</dbReference>
<dbReference type="Reactome" id="R-CEL-9755511">
    <property type="pathway name" value="KEAP1-NFE2L2 pathway"/>
</dbReference>
<dbReference type="Reactome" id="R-CEL-9762114">
    <property type="pathway name" value="GSK3B and BTRC:CUL1-mediated-degradation of NFE2L2"/>
</dbReference>
<dbReference type="Reactome" id="R-CEL-983168">
    <property type="pathway name" value="Antigen processing: Ubiquitination &amp; Proteasome degradation"/>
</dbReference>
<dbReference type="Reactome" id="R-CEL-9907900">
    <property type="pathway name" value="Proteasome assembly"/>
</dbReference>
<dbReference type="PRO" id="PR:O16368"/>
<dbReference type="Proteomes" id="UP000001940">
    <property type="component" value="Chromosome V"/>
</dbReference>
<dbReference type="Bgee" id="WBGene00004502">
    <property type="expression patterns" value="Expressed in germ line (C elegans) and 4 other cell types or tissues"/>
</dbReference>
<dbReference type="GO" id="GO:0005737">
    <property type="term" value="C:cytoplasm"/>
    <property type="evidence" value="ECO:0007669"/>
    <property type="project" value="UniProtKB-SubCell"/>
</dbReference>
<dbReference type="GO" id="GO:0005634">
    <property type="term" value="C:nucleus"/>
    <property type="evidence" value="ECO:0007669"/>
    <property type="project" value="UniProtKB-SubCell"/>
</dbReference>
<dbReference type="GO" id="GO:0008540">
    <property type="term" value="C:proteasome regulatory particle, base subcomplex"/>
    <property type="evidence" value="ECO:0000318"/>
    <property type="project" value="GO_Central"/>
</dbReference>
<dbReference type="GO" id="GO:0005524">
    <property type="term" value="F:ATP binding"/>
    <property type="evidence" value="ECO:0007669"/>
    <property type="project" value="UniProtKB-KW"/>
</dbReference>
<dbReference type="GO" id="GO:0016887">
    <property type="term" value="F:ATP hydrolysis activity"/>
    <property type="evidence" value="ECO:0007669"/>
    <property type="project" value="InterPro"/>
</dbReference>
<dbReference type="GO" id="GO:0036402">
    <property type="term" value="F:proteasome-activating activity"/>
    <property type="evidence" value="ECO:0000318"/>
    <property type="project" value="GO_Central"/>
</dbReference>
<dbReference type="GO" id="GO:0031625">
    <property type="term" value="F:ubiquitin protein ligase binding"/>
    <property type="evidence" value="ECO:0000353"/>
    <property type="project" value="WormBase"/>
</dbReference>
<dbReference type="GO" id="GO:0010629">
    <property type="term" value="P:negative regulation of gene expression"/>
    <property type="evidence" value="ECO:0000315"/>
    <property type="project" value="UniProtKB"/>
</dbReference>
<dbReference type="GO" id="GO:0043161">
    <property type="term" value="P:proteasome-mediated ubiquitin-dependent protein catabolic process"/>
    <property type="evidence" value="ECO:0000318"/>
    <property type="project" value="GO_Central"/>
</dbReference>
<dbReference type="CDD" id="cd19502">
    <property type="entry name" value="RecA-like_PAN_like"/>
    <property type="match status" value="1"/>
</dbReference>
<dbReference type="FunFam" id="2.40.50.140:FF:000067">
    <property type="entry name" value="26S protease regulatory subunit 4"/>
    <property type="match status" value="1"/>
</dbReference>
<dbReference type="FunFam" id="1.10.8.60:FF:000007">
    <property type="entry name" value="26S proteasome regulatory subunit 4"/>
    <property type="match status" value="1"/>
</dbReference>
<dbReference type="FunFam" id="3.40.50.300:FF:000039">
    <property type="entry name" value="26S proteasome regulatory subunit 4"/>
    <property type="match status" value="1"/>
</dbReference>
<dbReference type="Gene3D" id="1.10.8.60">
    <property type="match status" value="1"/>
</dbReference>
<dbReference type="Gene3D" id="2.40.50.140">
    <property type="entry name" value="Nucleic acid-binding proteins"/>
    <property type="match status" value="1"/>
</dbReference>
<dbReference type="Gene3D" id="3.40.50.300">
    <property type="entry name" value="P-loop containing nucleotide triphosphate hydrolases"/>
    <property type="match status" value="1"/>
</dbReference>
<dbReference type="InterPro" id="IPR050221">
    <property type="entry name" value="26S_Proteasome_ATPase"/>
</dbReference>
<dbReference type="InterPro" id="IPR003593">
    <property type="entry name" value="AAA+_ATPase"/>
</dbReference>
<dbReference type="InterPro" id="IPR041569">
    <property type="entry name" value="AAA_lid_3"/>
</dbReference>
<dbReference type="InterPro" id="IPR003959">
    <property type="entry name" value="ATPase_AAA_core"/>
</dbReference>
<dbReference type="InterPro" id="IPR003960">
    <property type="entry name" value="ATPase_AAA_CS"/>
</dbReference>
<dbReference type="InterPro" id="IPR012340">
    <property type="entry name" value="NA-bd_OB-fold"/>
</dbReference>
<dbReference type="InterPro" id="IPR027417">
    <property type="entry name" value="P-loop_NTPase"/>
</dbReference>
<dbReference type="InterPro" id="IPR032501">
    <property type="entry name" value="Prot_ATP_ID_OB_2nd"/>
</dbReference>
<dbReference type="PANTHER" id="PTHR23073">
    <property type="entry name" value="26S PROTEASOME REGULATORY SUBUNIT"/>
    <property type="match status" value="1"/>
</dbReference>
<dbReference type="Pfam" id="PF00004">
    <property type="entry name" value="AAA"/>
    <property type="match status" value="1"/>
</dbReference>
<dbReference type="Pfam" id="PF17862">
    <property type="entry name" value="AAA_lid_3"/>
    <property type="match status" value="1"/>
</dbReference>
<dbReference type="Pfam" id="PF16450">
    <property type="entry name" value="Prot_ATP_ID_OB_C"/>
    <property type="match status" value="1"/>
</dbReference>
<dbReference type="SMART" id="SM00382">
    <property type="entry name" value="AAA"/>
    <property type="match status" value="1"/>
</dbReference>
<dbReference type="SUPFAM" id="SSF52540">
    <property type="entry name" value="P-loop containing nucleoside triphosphate hydrolases"/>
    <property type="match status" value="1"/>
</dbReference>
<dbReference type="PROSITE" id="PS00674">
    <property type="entry name" value="AAA"/>
    <property type="match status" value="1"/>
</dbReference>
<feature type="chain" id="PRO_0000084681" description="Probable 26S proteasome regulatory subunit 4">
    <location>
        <begin position="1"/>
        <end position="443"/>
    </location>
</feature>
<feature type="region of interest" description="Disordered" evidence="4">
    <location>
        <begin position="1"/>
        <end position="53"/>
    </location>
</feature>
<feature type="compositionally biased region" description="Basic and acidic residues" evidence="4">
    <location>
        <begin position="12"/>
        <end position="29"/>
    </location>
</feature>
<feature type="binding site" evidence="3">
    <location>
        <begin position="229"/>
        <end position="236"/>
    </location>
    <ligand>
        <name>ATP</name>
        <dbReference type="ChEBI" id="CHEBI:30616"/>
    </ligand>
</feature>
<protein>
    <recommendedName>
        <fullName>Probable 26S proteasome regulatory subunit 4</fullName>
    </recommendedName>
</protein>
<comment type="function">
    <text evidence="2 5">The 26S proteasome is involved in the ATP-dependent degradation of ubiquitinated proteins. The regulatory (or ATPase) complex confers ATP dependency and substrate specificity to the 26S complex (By similarity). May play a role in the degradation of microtubule severing protein mei-1 (PubMed:22621901).</text>
</comment>
<comment type="subcellular location">
    <subcellularLocation>
        <location evidence="1">Cytoplasm</location>
    </subcellularLocation>
    <subcellularLocation>
        <location evidence="1">Nucleus</location>
    </subcellularLocation>
</comment>
<comment type="disruption phenotype">
    <text evidence="5">RNAi-mediated knockdown at the L1 larval stage, causes 20 percent increase in mei-1 protein levels.</text>
</comment>
<comment type="similarity">
    <text evidence="6">Belongs to the AAA ATPase family.</text>
</comment>
<reference key="1">
    <citation type="journal article" date="1998" name="Science">
        <title>Genome sequence of the nematode C. elegans: a platform for investigating biology.</title>
        <authorList>
            <consortium name="The C. elegans sequencing consortium"/>
        </authorList>
    </citation>
    <scope>NUCLEOTIDE SEQUENCE [LARGE SCALE GENOMIC DNA]</scope>
    <source>
        <strain>Bristol N2</strain>
    </source>
</reference>
<reference key="2">
    <citation type="journal article" date="2012" name="Mol. Biol. Cell">
        <title>UNC-89 (obscurin) binds to MEL-26, a BTB-domain protein, and affects the function of MEI-1 (katanin) in striated muscle of Caenorhabditis elegans.</title>
        <authorList>
            <person name="Wilson K.J."/>
            <person name="Qadota H."/>
            <person name="Mains P.E."/>
            <person name="Benian G.M."/>
        </authorList>
    </citation>
    <scope>FUNCTION</scope>
    <scope>DISRUPTION PHENOTYPE</scope>
</reference>
<keyword id="KW-0067">ATP-binding</keyword>
<keyword id="KW-0963">Cytoplasm</keyword>
<keyword id="KW-0547">Nucleotide-binding</keyword>
<keyword id="KW-0539">Nucleus</keyword>
<keyword id="KW-0647">Proteasome</keyword>
<keyword id="KW-1185">Reference proteome</keyword>
<accession>O16368</accession>
<organism>
    <name type="scientific">Caenorhabditis elegans</name>
    <dbReference type="NCBI Taxonomy" id="6239"/>
    <lineage>
        <taxon>Eukaryota</taxon>
        <taxon>Metazoa</taxon>
        <taxon>Ecdysozoa</taxon>
        <taxon>Nematoda</taxon>
        <taxon>Chromadorea</taxon>
        <taxon>Rhabditida</taxon>
        <taxon>Rhabditina</taxon>
        <taxon>Rhabditomorpha</taxon>
        <taxon>Rhabditoidea</taxon>
        <taxon>Rhabditidae</taxon>
        <taxon>Peloderinae</taxon>
        <taxon>Caenorhabditis</taxon>
    </lineage>
</organism>
<proteinExistence type="inferred from homology"/>
<name>PRS4_CAEEL</name>
<evidence type="ECO:0000250" key="1"/>
<evidence type="ECO:0000250" key="2">
    <source>
        <dbReference type="UniProtKB" id="P35998"/>
    </source>
</evidence>
<evidence type="ECO:0000255" key="3"/>
<evidence type="ECO:0000256" key="4">
    <source>
        <dbReference type="SAM" id="MobiDB-lite"/>
    </source>
</evidence>
<evidence type="ECO:0000269" key="5">
    <source>
    </source>
</evidence>
<evidence type="ECO:0000305" key="6"/>
<gene>
    <name type="primary">rpt-2</name>
    <name type="ORF">F29G9.5</name>
</gene>
<sequence>MGQQQSGFGGRGNDRGAGDGEKKEKKKYEAPIPSRIGKKKKGSKGPDAASKLPAVTPHARCRLKLLKSERIKDYLLMEQEFIQNQERLKPQEERQEEERAKVDELRGTPMAVGSLEEIIDDQHAIVSTNVGSEHYVNIMSFVDKEQLEPGCSVLLNHKNHAVIGVLSDDTDPMVSVMKLEKAPQETYADVGGLDQQIQEIKEAVELPLTHPEYYEEMGIRPPKGVILYGCPGTGKTLLAKAVANQTSATFLRIVGSELIQKYLGDGPKMVRELFRVAEENAPSIVFIDEIDAVGTKRYDSNSGGEREIQRTMLELLNQLDGFDSRGDVKVLMATNRIESLDPALIRPGRIDRKIEFPLPDEKTKRRIFQIHTSRMTLGKEVNLEEFITAKDELSGADIKAMCTEAGLLALRERRMRVTMEDFQKSKENVLYRKKEGAPEELYL</sequence>